<organism>
    <name type="scientific">Rattus norvegicus</name>
    <name type="common">Rat</name>
    <dbReference type="NCBI Taxonomy" id="10116"/>
    <lineage>
        <taxon>Eukaryota</taxon>
        <taxon>Metazoa</taxon>
        <taxon>Chordata</taxon>
        <taxon>Craniata</taxon>
        <taxon>Vertebrata</taxon>
        <taxon>Euteleostomi</taxon>
        <taxon>Mammalia</taxon>
        <taxon>Eutheria</taxon>
        <taxon>Euarchontoglires</taxon>
        <taxon>Glires</taxon>
        <taxon>Rodentia</taxon>
        <taxon>Myomorpha</taxon>
        <taxon>Muroidea</taxon>
        <taxon>Muridae</taxon>
        <taxon>Murinae</taxon>
        <taxon>Rattus</taxon>
    </lineage>
</organism>
<dbReference type="EMBL" id="M34959">
    <property type="protein sequence ID" value="AAA41525.1"/>
    <property type="molecule type" value="mRNA"/>
</dbReference>
<dbReference type="EMBL" id="X14765">
    <property type="protein sequence ID" value="CAA32873.1"/>
    <property type="molecule type" value="mRNA"/>
</dbReference>
<dbReference type="EMBL" id="U75406">
    <property type="protein sequence ID" value="AAB19108.1"/>
    <property type="molecule type" value="mRNA"/>
</dbReference>
<dbReference type="PIR" id="A30200">
    <property type="entry name" value="A30200"/>
</dbReference>
<dbReference type="RefSeq" id="NP_036989.1">
    <property type="nucleotide sequence ID" value="NM_012857.2"/>
</dbReference>
<dbReference type="RefSeq" id="XP_017455483.1">
    <property type="nucleotide sequence ID" value="XM_017599994.3"/>
</dbReference>
<dbReference type="SMR" id="P14562"/>
<dbReference type="BioGRID" id="247367">
    <property type="interactions" value="1"/>
</dbReference>
<dbReference type="FunCoup" id="P14562">
    <property type="interactions" value="2196"/>
</dbReference>
<dbReference type="IntAct" id="P14562">
    <property type="interactions" value="4"/>
</dbReference>
<dbReference type="MINT" id="P14562"/>
<dbReference type="STRING" id="10116.ENSRNOP00000026580"/>
<dbReference type="GlyCosmos" id="P14562">
    <property type="glycosylation" value="18 sites, No reported glycans"/>
</dbReference>
<dbReference type="GlyGen" id="P14562">
    <property type="glycosylation" value="19 sites"/>
</dbReference>
<dbReference type="PhosphoSitePlus" id="P14562"/>
<dbReference type="jPOST" id="P14562"/>
<dbReference type="PaxDb" id="10116-ENSRNOP00000026580"/>
<dbReference type="GeneID" id="25328"/>
<dbReference type="KEGG" id="rno:25328"/>
<dbReference type="UCSC" id="RGD:2989">
    <property type="organism name" value="rat"/>
</dbReference>
<dbReference type="AGR" id="RGD:2989"/>
<dbReference type="CTD" id="3916"/>
<dbReference type="RGD" id="2989">
    <property type="gene designation" value="Lamp1"/>
</dbReference>
<dbReference type="VEuPathDB" id="HostDB:ENSRNOG00000019629"/>
<dbReference type="eggNOG" id="KOG4818">
    <property type="taxonomic scope" value="Eukaryota"/>
</dbReference>
<dbReference type="HOGENOM" id="CLU_055379_2_0_1"/>
<dbReference type="InParanoid" id="P14562"/>
<dbReference type="OrthoDB" id="78627at9989"/>
<dbReference type="PhylomeDB" id="P14562"/>
<dbReference type="Reactome" id="R-RNO-6798695">
    <property type="pathway name" value="Neutrophil degranulation"/>
</dbReference>
<dbReference type="CD-CODE" id="246D7041">
    <property type="entry name" value="Chromatoid body"/>
</dbReference>
<dbReference type="PRO" id="PR:P14562"/>
<dbReference type="Proteomes" id="UP000002494">
    <property type="component" value="Chromosome 16"/>
</dbReference>
<dbReference type="Bgee" id="ENSRNOG00000019629">
    <property type="expression patterns" value="Expressed in adult mammalian kidney and 19 other cell types or tissues"/>
</dbReference>
<dbReference type="ExpressionAtlas" id="P14562">
    <property type="expression patterns" value="baseline and differential"/>
</dbReference>
<dbReference type="GO" id="GO:0097208">
    <property type="term" value="C:alveolar lamellar body"/>
    <property type="evidence" value="ECO:0000314"/>
    <property type="project" value="RGD"/>
</dbReference>
<dbReference type="GO" id="GO:0044754">
    <property type="term" value="C:autolysosome"/>
    <property type="evidence" value="ECO:0000266"/>
    <property type="project" value="RGD"/>
</dbReference>
<dbReference type="GO" id="GO:0000421">
    <property type="term" value="C:autophagosome membrane"/>
    <property type="evidence" value="ECO:0000266"/>
    <property type="project" value="RGD"/>
</dbReference>
<dbReference type="GO" id="GO:0009986">
    <property type="term" value="C:cell surface"/>
    <property type="evidence" value="ECO:0000266"/>
    <property type="project" value="RGD"/>
</dbReference>
<dbReference type="GO" id="GO:0044194">
    <property type="term" value="C:cytolytic granule"/>
    <property type="evidence" value="ECO:0000266"/>
    <property type="project" value="RGD"/>
</dbReference>
<dbReference type="GO" id="GO:0101004">
    <property type="term" value="C:cytolytic granule membrane"/>
    <property type="evidence" value="ECO:0000250"/>
    <property type="project" value="UniProtKB"/>
</dbReference>
<dbReference type="GO" id="GO:0005737">
    <property type="term" value="C:cytoplasm"/>
    <property type="evidence" value="ECO:0000266"/>
    <property type="project" value="RGD"/>
</dbReference>
<dbReference type="GO" id="GO:0005829">
    <property type="term" value="C:cytosol"/>
    <property type="evidence" value="ECO:0007669"/>
    <property type="project" value="GOC"/>
</dbReference>
<dbReference type="GO" id="GO:0030425">
    <property type="term" value="C:dendrite"/>
    <property type="evidence" value="ECO:0000314"/>
    <property type="project" value="BHF-UCL"/>
</dbReference>
<dbReference type="GO" id="GO:0005768">
    <property type="term" value="C:endosome"/>
    <property type="evidence" value="ECO:0000266"/>
    <property type="project" value="RGD"/>
</dbReference>
<dbReference type="GO" id="GO:0010008">
    <property type="term" value="C:endosome membrane"/>
    <property type="evidence" value="ECO:0000250"/>
    <property type="project" value="UniProtKB"/>
</dbReference>
<dbReference type="GO" id="GO:0009897">
    <property type="term" value="C:external side of plasma membrane"/>
    <property type="evidence" value="ECO:0000266"/>
    <property type="project" value="RGD"/>
</dbReference>
<dbReference type="GO" id="GO:0098978">
    <property type="term" value="C:glutamatergic synapse"/>
    <property type="evidence" value="ECO:0000314"/>
    <property type="project" value="SynGO"/>
</dbReference>
<dbReference type="GO" id="GO:0005770">
    <property type="term" value="C:late endosome"/>
    <property type="evidence" value="ECO:0000266"/>
    <property type="project" value="RGD"/>
</dbReference>
<dbReference type="GO" id="GO:0031902">
    <property type="term" value="C:late endosome membrane"/>
    <property type="evidence" value="ECO:0000318"/>
    <property type="project" value="GO_Central"/>
</dbReference>
<dbReference type="GO" id="GO:0005765">
    <property type="term" value="C:lysosomal membrane"/>
    <property type="evidence" value="ECO:0000250"/>
    <property type="project" value="UniProtKB"/>
</dbReference>
<dbReference type="GO" id="GO:0005764">
    <property type="term" value="C:lysosome"/>
    <property type="evidence" value="ECO:0000314"/>
    <property type="project" value="UniProtKB"/>
</dbReference>
<dbReference type="GO" id="GO:0042470">
    <property type="term" value="C:melanosome"/>
    <property type="evidence" value="ECO:0000266"/>
    <property type="project" value="RGD"/>
</dbReference>
<dbReference type="GO" id="GO:0005771">
    <property type="term" value="C:multivesicular body"/>
    <property type="evidence" value="ECO:0000314"/>
    <property type="project" value="RGD"/>
</dbReference>
<dbReference type="GO" id="GO:0043025">
    <property type="term" value="C:neuronal cell body"/>
    <property type="evidence" value="ECO:0000314"/>
    <property type="project" value="BHF-UCL"/>
</dbReference>
<dbReference type="GO" id="GO:0048471">
    <property type="term" value="C:perinuclear region of cytoplasm"/>
    <property type="evidence" value="ECO:0000266"/>
    <property type="project" value="RGD"/>
</dbReference>
<dbReference type="GO" id="GO:0045335">
    <property type="term" value="C:phagocytic vesicle"/>
    <property type="evidence" value="ECO:0000266"/>
    <property type="project" value="RGD"/>
</dbReference>
<dbReference type="GO" id="GO:0061474">
    <property type="term" value="C:phagolysosome membrane"/>
    <property type="evidence" value="ECO:0000266"/>
    <property type="project" value="RGD"/>
</dbReference>
<dbReference type="GO" id="GO:0005886">
    <property type="term" value="C:plasma membrane"/>
    <property type="evidence" value="ECO:0000250"/>
    <property type="project" value="UniProtKB"/>
</dbReference>
<dbReference type="GO" id="GO:0098794">
    <property type="term" value="C:postsynapse"/>
    <property type="evidence" value="ECO:0000314"/>
    <property type="project" value="SynGO"/>
</dbReference>
<dbReference type="GO" id="GO:0042383">
    <property type="term" value="C:sarcolemma"/>
    <property type="evidence" value="ECO:0000266"/>
    <property type="project" value="RGD"/>
</dbReference>
<dbReference type="GO" id="GO:0008021">
    <property type="term" value="C:synaptic vesicle"/>
    <property type="evidence" value="ECO:0000266"/>
    <property type="project" value="RGD"/>
</dbReference>
<dbReference type="GO" id="GO:0030672">
    <property type="term" value="C:synaptic vesicle membrane"/>
    <property type="evidence" value="ECO:0000314"/>
    <property type="project" value="SynGO"/>
</dbReference>
<dbReference type="GO" id="GO:0031982">
    <property type="term" value="C:vesicle"/>
    <property type="evidence" value="ECO:0000266"/>
    <property type="project" value="RGD"/>
</dbReference>
<dbReference type="GO" id="GO:0019899">
    <property type="term" value="F:enzyme binding"/>
    <property type="evidence" value="ECO:0000266"/>
    <property type="project" value="RGD"/>
</dbReference>
<dbReference type="GO" id="GO:0008200">
    <property type="term" value="F:ion channel inhibitor activity"/>
    <property type="evidence" value="ECO:0000250"/>
    <property type="project" value="UniProtKB"/>
</dbReference>
<dbReference type="GO" id="GO:0019904">
    <property type="term" value="F:protein domain specific binding"/>
    <property type="evidence" value="ECO:0000266"/>
    <property type="project" value="RGD"/>
</dbReference>
<dbReference type="GO" id="GO:0048102">
    <property type="term" value="P:autophagic cell death"/>
    <property type="evidence" value="ECO:0000314"/>
    <property type="project" value="RGD"/>
</dbReference>
<dbReference type="GO" id="GO:0072594">
    <property type="term" value="P:establishment of protein localization to organelle"/>
    <property type="evidence" value="ECO:0000266"/>
    <property type="project" value="RGD"/>
</dbReference>
<dbReference type="GO" id="GO:0090160">
    <property type="term" value="P:Golgi to lysosome transport"/>
    <property type="evidence" value="ECO:0000266"/>
    <property type="project" value="RGD"/>
</dbReference>
<dbReference type="GO" id="GO:0140507">
    <property type="term" value="P:granzyme-mediated programmed cell death signaling pathway"/>
    <property type="evidence" value="ECO:0000266"/>
    <property type="project" value="RGD"/>
</dbReference>
<dbReference type="GO" id="GO:0007042">
    <property type="term" value="P:lysosomal lumen acidification"/>
    <property type="evidence" value="ECO:0000250"/>
    <property type="project" value="UniProtKB"/>
</dbReference>
<dbReference type="GO" id="GO:0043323">
    <property type="term" value="P:positive regulation of natural killer cell degranulation"/>
    <property type="evidence" value="ECO:0000266"/>
    <property type="project" value="RGD"/>
</dbReference>
<dbReference type="GO" id="GO:0045954">
    <property type="term" value="P:positive regulation of natural killer cell mediated cytotoxicity"/>
    <property type="evidence" value="ECO:0000266"/>
    <property type="project" value="RGD"/>
</dbReference>
<dbReference type="GO" id="GO:0050821">
    <property type="term" value="P:protein stabilization"/>
    <property type="evidence" value="ECO:0000250"/>
    <property type="project" value="CAFA"/>
</dbReference>
<dbReference type="GO" id="GO:1902513">
    <property type="term" value="P:regulation of organelle transport along microtubule"/>
    <property type="evidence" value="ECO:0000266"/>
    <property type="project" value="RGD"/>
</dbReference>
<dbReference type="CDD" id="cd12087">
    <property type="entry name" value="TM_EGFR-like"/>
    <property type="match status" value="1"/>
</dbReference>
<dbReference type="FunFam" id="2.40.160.110:FF:000005">
    <property type="entry name" value="Lysosome-associated membrane glycoprotein 1"/>
    <property type="match status" value="1"/>
</dbReference>
<dbReference type="FunFam" id="2.40.160.110:FF:000001">
    <property type="entry name" value="lysosome-associated membrane glycoprotein 2 isoform X2"/>
    <property type="match status" value="1"/>
</dbReference>
<dbReference type="Gene3D" id="2.40.160.110">
    <property type="match status" value="2"/>
</dbReference>
<dbReference type="InterPro" id="IPR048528">
    <property type="entry name" value="Lamp2-like_luminal"/>
</dbReference>
<dbReference type="InterPro" id="IPR048524">
    <property type="entry name" value="Lamp2-like_TM"/>
</dbReference>
<dbReference type="InterPro" id="IPR018134">
    <property type="entry name" value="LAMP_CS"/>
</dbReference>
<dbReference type="InterPro" id="IPR002000">
    <property type="entry name" value="Lysosome-assoc_membr_glycop"/>
</dbReference>
<dbReference type="PANTHER" id="PTHR11506">
    <property type="entry name" value="LYSOSOME-ASSOCIATED MEMBRANE GLYCOPROTEIN"/>
    <property type="match status" value="1"/>
</dbReference>
<dbReference type="PANTHER" id="PTHR11506:SF35">
    <property type="entry name" value="LYSOSOME-ASSOCIATED MEMBRANE GLYCOPROTEIN 5"/>
    <property type="match status" value="1"/>
</dbReference>
<dbReference type="Pfam" id="PF01299">
    <property type="entry name" value="Lamp2-like_luminal"/>
    <property type="match status" value="2"/>
</dbReference>
<dbReference type="Pfam" id="PF21222">
    <property type="entry name" value="Lamp2_2nd"/>
    <property type="match status" value="1"/>
</dbReference>
<dbReference type="PRINTS" id="PR00336">
    <property type="entry name" value="LYSASSOCTDMP"/>
</dbReference>
<dbReference type="PROSITE" id="PS00310">
    <property type="entry name" value="LAMP_1"/>
    <property type="match status" value="2"/>
</dbReference>
<dbReference type="PROSITE" id="PS00311">
    <property type="entry name" value="LAMP_2"/>
    <property type="match status" value="1"/>
</dbReference>
<dbReference type="PROSITE" id="PS51407">
    <property type="entry name" value="LAMP_3"/>
    <property type="match status" value="1"/>
</dbReference>
<reference key="1">
    <citation type="journal article" date="1988" name="Proc. Natl. Acad. Sci. U.S.A.">
        <title>Derived protein sequence, oligosaccharides, and membrane insertion of the 120-kDa lysosomal membrane glycoprotein (lgp120): identification of a highly conserved family of lysosomal membrane glycoproteins.</title>
        <authorList>
            <person name="Howe C.L."/>
            <person name="Granger B.L."/>
            <person name="Hull M."/>
            <person name="Green S.A."/>
            <person name="Gabel C.A."/>
            <person name="Helenius A."/>
            <person name="Mellman I."/>
        </authorList>
    </citation>
    <scope>NUCLEOTIDE SEQUENCE [MRNA]</scope>
</reference>
<reference key="2">
    <citation type="journal article" date="1989" name="FEBS Lett.">
        <title>Isolation and sequencing of a cDNA clone encoding 107 kDa sialoglycoprotein in rat liver lysosomal membranes.</title>
        <authorList>
            <person name="Himeno M."/>
            <person name="Noguchi Y."/>
            <person name="Sasaki H."/>
            <person name="Tanaka Y."/>
            <person name="Furuno K."/>
            <person name="Kono A."/>
            <person name="Sakaki Y."/>
            <person name="Kato K."/>
        </authorList>
    </citation>
    <scope>NUCLEOTIDE SEQUENCE [MRNA] OF 22-407</scope>
</reference>
<reference key="3">
    <citation type="submission" date="2007-09" db="UniProtKB">
        <authorList>
            <person name="Lubec G."/>
            <person name="Kang S.U."/>
            <person name="Lubec S."/>
        </authorList>
    </citation>
    <scope>PROTEIN SEQUENCE OF 130-141; 147-155; 247-268 AND 317-353</scope>
    <scope>IDENTIFICATION BY MASS SPECTROMETRY</scope>
    <source>
        <strain>Sprague-Dawley</strain>
        <tissue>Brain</tissue>
    </source>
</reference>
<reference key="4">
    <citation type="submission" date="1996-10" db="EMBL/GenBank/DDBJ databases">
        <authorList>
            <person name="Adams L.A."/>
            <person name="Werny I."/>
            <person name="Schwartz S.M."/>
        </authorList>
    </citation>
    <scope>NUCLEOTIDE SEQUENCE [MRNA] OF 283-357</scope>
    <source>
        <strain>Wistar Kyoto</strain>
        <tissue>Aortic smooth muscle</tissue>
    </source>
</reference>
<sequence length="407" mass="43969">MAAPGARRPLLLLLLAGLAHSAPALFEVKDNNGTACIMASFSASFLTTYDAGHVSKVSNMTLPASAEVLKNSSSCGEKNASEPTLAITFGEGYLLKLTFTKNTTRYSVQHMYFTYNLSDTQFFPNASSKGPDTVDSTTDIKADINKTYRCVSDIRVYMKNVTIVLWDATIQAYLPSSNFSKEETRCPQDQPSPTTGPPSPSPPLVPTNPSVSKYNVTGDNGTCLLASMALQLNITYMKKDNTTVTRAFNINPSDKYSGTCGAQLVTLKVGNKSRVLELQFGMNATSSLFFLQGVQLNMTLPDAIEPTFSTSNYSLKALQASVGNSYKCNSEEHIFVSKALALNVFSVQVQAFRVESDRFGSVEECVQDGNNMLIPIAVGGALAGLVLIVLIAYLIGRKRSHAGYQTI</sequence>
<protein>
    <recommendedName>
        <fullName>Lysosome-associated membrane glycoprotein 1</fullName>
        <shortName>LAMP-1</shortName>
        <shortName>Lysosome-associated membrane protein 1</shortName>
    </recommendedName>
    <alternativeName>
        <fullName>120 kDa lysosomal membrane glycoprotein</fullName>
        <shortName>LGP-120</shortName>
    </alternativeName>
    <alternativeName>
        <fullName>CD107 antigen-like family member A</fullName>
    </alternativeName>
    <cdAntigenName>CD107a</cdAntigenName>
</protein>
<accession>P14562</accession>
<accession>P97620</accession>
<comment type="function">
    <text evidence="2">Lysosomal membrane glycoprotein which plays an important role in lysosome biogenesis, lysosomal pH regulation, autophagy and cholesterol homeostasis. Acts as an important regulator of lysosomal lumen pH regulation by acting as a direct inhibitor of the proton channel TMEM175, facilitating lysosomal acidification for optimal hydrolase activity. Also plays an important role in NK-cells cytotoxicity. Mechanistically, participates in cytotoxic granule movement to the cell surface and perforin trafficking to the lytic granule. In addition, protects NK-cells from degranulation-associated damage induced by their own cytotoxic granule content. Presents carbohydrate ligands to selectins.</text>
</comment>
<comment type="subunit">
    <text evidence="2">Interacts with ABCB9; this interaction strongly stabilizes ABCB9 and protects ABCB9 against lysosomal degradation. Interacts with FURIN. Interacts with TMEM175; inhibiting the proton channel activity of TMEM175.</text>
</comment>
<comment type="subcellular location">
    <subcellularLocation>
        <location evidence="2">Lysosome membrane</location>
        <topology evidence="3">Single-pass type I membrane protein</topology>
    </subcellularLocation>
    <subcellularLocation>
        <location evidence="2">Endosome membrane</location>
        <topology evidence="3">Single-pass type I membrane protein</topology>
    </subcellularLocation>
    <subcellularLocation>
        <location evidence="2">Late endosome membrane</location>
        <topology evidence="3">Single-pass type I membrane protein</topology>
    </subcellularLocation>
    <subcellularLocation>
        <location evidence="2">Cell membrane</location>
        <topology evidence="3">Single-pass type I membrane protein</topology>
    </subcellularLocation>
    <subcellularLocation>
        <location evidence="2">Cytolytic granule membrane</location>
        <topology evidence="3">Single-pass type I membrane protein</topology>
    </subcellularLocation>
    <text evidence="1 2">This protein shuttles between lysosomes, endosomes, and the plasma membrane (By similarity). Colocalizes with OSBPL1A at the late endosome (By similarity).</text>
</comment>
<comment type="PTM">
    <text evidence="2">O- and N-glycosylated; some of the N-glycans attached to LAMP-1 are polylactosaminoglycans.</text>
</comment>
<comment type="similarity">
    <text evidence="4">Belongs to the LAMP family.</text>
</comment>
<feature type="signal peptide" evidence="6">
    <location>
        <begin position="1"/>
        <end position="21"/>
    </location>
</feature>
<feature type="chain" id="PRO_0000017106" description="Lysosome-associated membrane glycoprotein 1">
    <location>
        <begin position="22"/>
        <end position="407"/>
    </location>
</feature>
<feature type="topological domain" description="Lumenal" evidence="3">
    <location>
        <begin position="22"/>
        <end position="371"/>
    </location>
</feature>
<feature type="transmembrane region" description="Helical" evidence="4">
    <location>
        <begin position="372"/>
        <end position="395"/>
    </location>
</feature>
<feature type="topological domain" description="Cytoplasmic" evidence="4">
    <location>
        <begin position="396"/>
        <end position="407"/>
    </location>
</feature>
<feature type="region of interest" description="First lumenal domain">
    <location>
        <begin position="22"/>
        <end position="189"/>
    </location>
</feature>
<feature type="region of interest" description="Disordered" evidence="5">
    <location>
        <begin position="180"/>
        <end position="211"/>
    </location>
</feature>
<feature type="region of interest" description="Hinge">
    <location>
        <begin position="190"/>
        <end position="219"/>
    </location>
</feature>
<feature type="region of interest" description="Second lumenal domain">
    <location>
        <begin position="220"/>
        <end position="371"/>
    </location>
</feature>
<feature type="compositionally biased region" description="Pro residues" evidence="5">
    <location>
        <begin position="194"/>
        <end position="206"/>
    </location>
</feature>
<feature type="glycosylation site" description="N-linked (GlcNAc...) asparagine" evidence="3">
    <location>
        <position position="32"/>
    </location>
</feature>
<feature type="glycosylation site" description="N-linked (GlcNAc...) asparagine" evidence="3">
    <location>
        <position position="59"/>
    </location>
</feature>
<feature type="glycosylation site" description="N-linked (GlcNAc...) asparagine" evidence="3">
    <location>
        <position position="71"/>
    </location>
</feature>
<feature type="glycosylation site" description="N-linked (GlcNAc...) asparagine" evidence="3">
    <location>
        <position position="79"/>
    </location>
</feature>
<feature type="glycosylation site" description="N-linked (GlcNAc...) asparagine" evidence="3">
    <location>
        <position position="102"/>
    </location>
</feature>
<feature type="glycosylation site" description="N-linked (GlcNAc...) asparagine" evidence="3">
    <location>
        <position position="116"/>
    </location>
</feature>
<feature type="glycosylation site" description="N-linked (GlcNAc...) asparagine" evidence="3">
    <location>
        <position position="125"/>
    </location>
</feature>
<feature type="glycosylation site" description="N-linked (GlcNAc...) asparagine" evidence="3">
    <location>
        <position position="145"/>
    </location>
</feature>
<feature type="glycosylation site" description="N-linked (GlcNAc...) asparagine" evidence="3">
    <location>
        <position position="160"/>
    </location>
</feature>
<feature type="glycosylation site" description="N-linked (GlcNAc...) asparagine" evidence="3">
    <location>
        <position position="178"/>
    </location>
</feature>
<feature type="glycosylation site" description="N-linked (GlcNAc...) asparagine" evidence="3">
    <location>
        <position position="215"/>
    </location>
</feature>
<feature type="glycosylation site" description="N-linked (GlcNAc...) asparagine" evidence="3">
    <location>
        <position position="220"/>
    </location>
</feature>
<feature type="glycosylation site" description="N-linked (GlcNAc...) asparagine" evidence="3">
    <location>
        <position position="233"/>
    </location>
</feature>
<feature type="glycosylation site" description="N-linked (GlcNAc...) asparagine" evidence="3">
    <location>
        <position position="241"/>
    </location>
</feature>
<feature type="glycosylation site" description="N-linked (GlcNAc...) asparagine" evidence="3">
    <location>
        <position position="271"/>
    </location>
</feature>
<feature type="glycosylation site" description="N-linked (GlcNAc...) asparagine" evidence="3">
    <location>
        <position position="283"/>
    </location>
</feature>
<feature type="glycosylation site" description="N-linked (GlcNAc...) asparagine" evidence="3">
    <location>
        <position position="297"/>
    </location>
</feature>
<feature type="glycosylation site" description="N-linked (GlcNAc...) asparagine" evidence="3">
    <location>
        <position position="312"/>
    </location>
</feature>
<feature type="disulfide bond" evidence="4">
    <location>
        <begin position="36"/>
        <end position="75"/>
    </location>
</feature>
<feature type="disulfide bond" evidence="4">
    <location>
        <begin position="150"/>
        <end position="186"/>
    </location>
</feature>
<feature type="disulfide bond" evidence="4">
    <location>
        <begin position="223"/>
        <end position="260"/>
    </location>
</feature>
<feature type="disulfide bond" evidence="4">
    <location>
        <begin position="328"/>
        <end position="365"/>
    </location>
</feature>
<feature type="sequence conflict" description="In Ref. 4; AAB19108." evidence="7" ref="4">
    <original>GV</original>
    <variation>EF</variation>
    <location>
        <begin position="293"/>
        <end position="294"/>
    </location>
</feature>
<feature type="sequence conflict" description="In Ref. 4; AAB19108." evidence="7" ref="4">
    <original>N</original>
    <variation>T</variation>
    <location>
        <position position="329"/>
    </location>
</feature>
<feature type="sequence conflict" description="In Ref. 4." evidence="7" ref="4">
    <original>SD</original>
    <variation>VT</variation>
    <location>
        <begin position="356"/>
        <end position="357"/>
    </location>
</feature>
<proteinExistence type="evidence at protein level"/>
<gene>
    <name type="primary">Lamp1</name>
    <name type="synonym">Lamp-1</name>
</gene>
<name>LAMP1_RAT</name>
<evidence type="ECO:0000250" key="1">
    <source>
        <dbReference type="UniProtKB" id="P05300"/>
    </source>
</evidence>
<evidence type="ECO:0000250" key="2">
    <source>
        <dbReference type="UniProtKB" id="P11279"/>
    </source>
</evidence>
<evidence type="ECO:0000255" key="3"/>
<evidence type="ECO:0000255" key="4">
    <source>
        <dbReference type="PROSITE-ProRule" id="PRU00740"/>
    </source>
</evidence>
<evidence type="ECO:0000256" key="5">
    <source>
        <dbReference type="SAM" id="MobiDB-lite"/>
    </source>
</evidence>
<evidence type="ECO:0000269" key="6">
    <source>
    </source>
</evidence>
<evidence type="ECO:0000305" key="7"/>
<keyword id="KW-1003">Cell membrane</keyword>
<keyword id="KW-0903">Direct protein sequencing</keyword>
<keyword id="KW-1015">Disulfide bond</keyword>
<keyword id="KW-0967">Endosome</keyword>
<keyword id="KW-0325">Glycoprotein</keyword>
<keyword id="KW-0458">Lysosome</keyword>
<keyword id="KW-0472">Membrane</keyword>
<keyword id="KW-1185">Reference proteome</keyword>
<keyword id="KW-0732">Signal</keyword>
<keyword id="KW-0812">Transmembrane</keyword>
<keyword id="KW-1133">Transmembrane helix</keyword>